<sequence length="774" mass="88040">MHHNNHHHGHHGRYQHHHNQHLKRPLKGGTEDDDILEITPIGSGSEVGRSCVLLKYKGKKVMFDCGVHPAYSGLVSLPFFDSIESDIPDIDLLLVSHFHLDHAAAVPYFVGKTKFKGRVFMTHPTKAIYGMLLSDYVKVSNITRDDDMLFDKSDLDRSLEKIEKVRYRQKVEHNGIKVTCFNAGHVLGAAMFMIEIAGVKILYTGDFSRQEDRHLMGAETPPVKVDVLIIESTYGVQVHEPRLEREKRFTSSVHQVVERNGKCLIPVFALGRAQELLLILDEYWIANPQLHHVPIYYASALAKKCMGVYRTYINMMNDRVRAQFDVSNPFEFKHIKNIKGIESFDDRGPCVFMASPGMLQSGLSRQLFERWCSDKRNGIVIPGYSVEGTLAKHIMSEPAEITRLDNVNVPLNLTVSYVSFSAHSDFLQTSEFIQEIQPPHVVLVHGDANEMSRLRQSLVAKFKTINVLTPKNAMSVALEFRPEKVAKTLGSIITNPPKQNDIIQGILVTKDFTHHILSASDIHNYTNLKTNIIKQKLTLPFAQTYHILISTLEQIYEQIIESTESTGGGGNEKPTITIYNEIKLIYNIGVSIILEWNSNTVNDMICDSIIALISQIELNPLSIKVRNPNFNNIDEKEEITKDDIEKEKEKEKEQQDGDDDDDDEIQIKVVSRKSRKLSNKLNTITEVKLLLEQQYGNFKVDENDPLILHFNLDNQKAIIHLETLTVESLDQILKQKIENSIKRIILSVSPIGNNLNQINNQDNENNIKMETDFK</sequence>
<evidence type="ECO:0000250" key="1">
    <source>
        <dbReference type="UniProtKB" id="Q9UKF6"/>
    </source>
</evidence>
<evidence type="ECO:0000255" key="2"/>
<evidence type="ECO:0000256" key="3">
    <source>
        <dbReference type="SAM" id="MobiDB-lite"/>
    </source>
</evidence>
<evidence type="ECO:0000305" key="4"/>
<comment type="function">
    <text evidence="1">Component of the cleavage and polyadenylation specificity factor (CPSF) complex that play a key role in pre-mRNA 3'-end formation, recognizing the AAUAAA signal sequence and interacting with poly(A) polymerase and other factors to bring about cleavage and poly(A) addition. Has endonuclease activity, and functions as an mRNA 3'-end-processing endonuclease (By similarity).</text>
</comment>
<comment type="cofactor">
    <cofactor evidence="1">
        <name>Zn(2+)</name>
        <dbReference type="ChEBI" id="CHEBI:29105"/>
    </cofactor>
    <text evidence="1">Binds 2 Zn(2+) ions per subunit.</text>
</comment>
<comment type="subunit">
    <text evidence="1">Component of the cleavage and polyadenylation specificity factor (CPSF) complex.</text>
</comment>
<comment type="subcellular location">
    <subcellularLocation>
        <location evidence="1">Nucleus</location>
    </subcellularLocation>
</comment>
<comment type="similarity">
    <text evidence="4">Belongs to the metallo-beta-lactamase superfamily. RNA-metabolizing metallo-beta-lactamase-like family. CPSF3 subfamily.</text>
</comment>
<accession>Q86A79</accession>
<accession>Q555Y4</accession>
<dbReference type="EC" id="3.1.27.-" evidence="1"/>
<dbReference type="EMBL" id="AAFI02000012">
    <property type="protein sequence ID" value="EAL70292.1"/>
    <property type="molecule type" value="Genomic_DNA"/>
</dbReference>
<dbReference type="RefSeq" id="XP_643926.1">
    <property type="nucleotide sequence ID" value="XM_638834.1"/>
</dbReference>
<dbReference type="SMR" id="Q86A79"/>
<dbReference type="FunCoup" id="Q86A79">
    <property type="interactions" value="828"/>
</dbReference>
<dbReference type="STRING" id="44689.Q86A79"/>
<dbReference type="PaxDb" id="44689-DDB0233696"/>
<dbReference type="EnsemblProtists" id="EAL70292">
    <property type="protein sequence ID" value="EAL70292"/>
    <property type="gene ID" value="DDB_G0274799"/>
</dbReference>
<dbReference type="GeneID" id="8619353"/>
<dbReference type="KEGG" id="ddi:DDB_G0274799"/>
<dbReference type="dictyBase" id="DDB_G0274799">
    <property type="gene designation" value="cpsf3"/>
</dbReference>
<dbReference type="VEuPathDB" id="AmoebaDB:DDB_G0274799"/>
<dbReference type="eggNOG" id="KOG1137">
    <property type="taxonomic scope" value="Eukaryota"/>
</dbReference>
<dbReference type="HOGENOM" id="CLU_009673_2_3_1"/>
<dbReference type="InParanoid" id="Q86A79"/>
<dbReference type="OMA" id="CKQHITL"/>
<dbReference type="PhylomeDB" id="Q86A79"/>
<dbReference type="Reactome" id="R-DDI-77595">
    <property type="pathway name" value="Processing of Intronless Pre-mRNAs"/>
</dbReference>
<dbReference type="PRO" id="PR:Q86A79"/>
<dbReference type="Proteomes" id="UP000002195">
    <property type="component" value="Chromosome 2"/>
</dbReference>
<dbReference type="GO" id="GO:0005847">
    <property type="term" value="C:mRNA cleavage and polyadenylation specificity factor complex"/>
    <property type="evidence" value="ECO:0000250"/>
    <property type="project" value="UniProtKB"/>
</dbReference>
<dbReference type="GO" id="GO:0004534">
    <property type="term" value="F:5'-3' RNA exonuclease activity"/>
    <property type="evidence" value="ECO:0000318"/>
    <property type="project" value="GO_Central"/>
</dbReference>
<dbReference type="GO" id="GO:0046872">
    <property type="term" value="F:metal ion binding"/>
    <property type="evidence" value="ECO:0007669"/>
    <property type="project" value="UniProtKB-KW"/>
</dbReference>
<dbReference type="GO" id="GO:0035925">
    <property type="term" value="F:mRNA 3'-UTR AU-rich region binding"/>
    <property type="evidence" value="ECO:0000250"/>
    <property type="project" value="UniProtKB"/>
</dbReference>
<dbReference type="GO" id="GO:0003723">
    <property type="term" value="F:RNA binding"/>
    <property type="evidence" value="ECO:0000318"/>
    <property type="project" value="GO_Central"/>
</dbReference>
<dbReference type="GO" id="GO:0004521">
    <property type="term" value="F:RNA endonuclease activity"/>
    <property type="evidence" value="ECO:0000318"/>
    <property type="project" value="GO_Central"/>
</dbReference>
<dbReference type="GO" id="GO:0180012">
    <property type="term" value="P:co-transcriptional RNA 3'-end processing, cleavage and polyadenylation pathway"/>
    <property type="evidence" value="ECO:0000250"/>
    <property type="project" value="UniProtKB"/>
</dbReference>
<dbReference type="GO" id="GO:0006398">
    <property type="term" value="P:mRNA 3'-end processing by stem-loop binding and cleavage"/>
    <property type="evidence" value="ECO:0000318"/>
    <property type="project" value="GO_Central"/>
</dbReference>
<dbReference type="CDD" id="cd16292">
    <property type="entry name" value="CPSF3-like_MBL-fold"/>
    <property type="match status" value="1"/>
</dbReference>
<dbReference type="FunFam" id="3.40.50.10890:FF:000001">
    <property type="entry name" value="Cleavage and polyadenylation specificity factor subunit 3"/>
    <property type="match status" value="1"/>
</dbReference>
<dbReference type="Gene3D" id="3.40.50.10890">
    <property type="match status" value="1"/>
</dbReference>
<dbReference type="Gene3D" id="3.60.15.10">
    <property type="entry name" value="Ribonuclease Z/Hydroxyacylglutathione hydrolase-like"/>
    <property type="match status" value="1"/>
</dbReference>
<dbReference type="InterPro" id="IPR022712">
    <property type="entry name" value="Beta_Casp"/>
</dbReference>
<dbReference type="InterPro" id="IPR021718">
    <property type="entry name" value="CPSF73-100_C"/>
</dbReference>
<dbReference type="InterPro" id="IPR050698">
    <property type="entry name" value="MBL"/>
</dbReference>
<dbReference type="InterPro" id="IPR001279">
    <property type="entry name" value="Metallo-B-lactamas"/>
</dbReference>
<dbReference type="InterPro" id="IPR036866">
    <property type="entry name" value="RibonucZ/Hydroxyglut_hydro"/>
</dbReference>
<dbReference type="InterPro" id="IPR011108">
    <property type="entry name" value="RMMBL"/>
</dbReference>
<dbReference type="PANTHER" id="PTHR11203">
    <property type="entry name" value="CLEAVAGE AND POLYADENYLATION SPECIFICITY FACTOR FAMILY MEMBER"/>
    <property type="match status" value="1"/>
</dbReference>
<dbReference type="PANTHER" id="PTHR11203:SF11">
    <property type="entry name" value="CLEAVAGE AND POLYADENYLATION SPECIFICITY FACTOR SUBUNIT 3"/>
    <property type="match status" value="1"/>
</dbReference>
<dbReference type="Pfam" id="PF10996">
    <property type="entry name" value="Beta-Casp"/>
    <property type="match status" value="1"/>
</dbReference>
<dbReference type="Pfam" id="PF11718">
    <property type="entry name" value="CPSF73-100_C"/>
    <property type="match status" value="1"/>
</dbReference>
<dbReference type="Pfam" id="PF16661">
    <property type="entry name" value="Lactamase_B_6"/>
    <property type="match status" value="1"/>
</dbReference>
<dbReference type="Pfam" id="PF07521">
    <property type="entry name" value="RMMBL"/>
    <property type="match status" value="1"/>
</dbReference>
<dbReference type="SMART" id="SM01027">
    <property type="entry name" value="Beta-Casp"/>
    <property type="match status" value="1"/>
</dbReference>
<dbReference type="SMART" id="SM01098">
    <property type="entry name" value="CPSF73-100_C"/>
    <property type="match status" value="1"/>
</dbReference>
<dbReference type="SMART" id="SM00849">
    <property type="entry name" value="Lactamase_B"/>
    <property type="match status" value="1"/>
</dbReference>
<dbReference type="SUPFAM" id="SSF56281">
    <property type="entry name" value="Metallo-hydrolase/oxidoreductase"/>
    <property type="match status" value="1"/>
</dbReference>
<protein>
    <recommendedName>
        <fullName>Cleavage and polyadenylation specificity factor subunit 3</fullName>
        <shortName>Cleavage and polyadenylation specificity factor 3</shortName>
        <ecNumber evidence="1">3.1.27.-</ecNumber>
    </recommendedName>
</protein>
<keyword id="KW-0255">Endonuclease</keyword>
<keyword id="KW-0378">Hydrolase</keyword>
<keyword id="KW-0479">Metal-binding</keyword>
<keyword id="KW-0507">mRNA processing</keyword>
<keyword id="KW-0540">Nuclease</keyword>
<keyword id="KW-0539">Nucleus</keyword>
<keyword id="KW-1185">Reference proteome</keyword>
<keyword id="KW-0694">RNA-binding</keyword>
<keyword id="KW-0862">Zinc</keyword>
<reference key="1">
    <citation type="journal article" date="2002" name="Nature">
        <title>Sequence and analysis of chromosome 2 of Dictyostelium discoideum.</title>
        <authorList>
            <person name="Gloeckner G."/>
            <person name="Eichinger L."/>
            <person name="Szafranski K."/>
            <person name="Pachebat J.A."/>
            <person name="Bankier A.T."/>
            <person name="Dear P.H."/>
            <person name="Lehmann R."/>
            <person name="Baumgart C."/>
            <person name="Parra G."/>
            <person name="Abril J.F."/>
            <person name="Guigo R."/>
            <person name="Kumpf K."/>
            <person name="Tunggal B."/>
            <person name="Cox E.C."/>
            <person name="Quail M.A."/>
            <person name="Platzer M."/>
            <person name="Rosenthal A."/>
            <person name="Noegel A.A."/>
        </authorList>
    </citation>
    <scope>NUCLEOTIDE SEQUENCE [LARGE SCALE GENOMIC DNA]</scope>
    <source>
        <strain>AX4</strain>
    </source>
</reference>
<reference key="2">
    <citation type="journal article" date="2005" name="Nature">
        <title>The genome of the social amoeba Dictyostelium discoideum.</title>
        <authorList>
            <person name="Eichinger L."/>
            <person name="Pachebat J.A."/>
            <person name="Gloeckner G."/>
            <person name="Rajandream M.A."/>
            <person name="Sucgang R."/>
            <person name="Berriman M."/>
            <person name="Song J."/>
            <person name="Olsen R."/>
            <person name="Szafranski K."/>
            <person name="Xu Q."/>
            <person name="Tunggal B."/>
            <person name="Kummerfeld S."/>
            <person name="Madera M."/>
            <person name="Konfortov B.A."/>
            <person name="Rivero F."/>
            <person name="Bankier A.T."/>
            <person name="Lehmann R."/>
            <person name="Hamlin N."/>
            <person name="Davies R."/>
            <person name="Gaudet P."/>
            <person name="Fey P."/>
            <person name="Pilcher K."/>
            <person name="Chen G."/>
            <person name="Saunders D."/>
            <person name="Sodergren E.J."/>
            <person name="Davis P."/>
            <person name="Kerhornou A."/>
            <person name="Nie X."/>
            <person name="Hall N."/>
            <person name="Anjard C."/>
            <person name="Hemphill L."/>
            <person name="Bason N."/>
            <person name="Farbrother P."/>
            <person name="Desany B."/>
            <person name="Just E."/>
            <person name="Morio T."/>
            <person name="Rost R."/>
            <person name="Churcher C.M."/>
            <person name="Cooper J."/>
            <person name="Haydock S."/>
            <person name="van Driessche N."/>
            <person name="Cronin A."/>
            <person name="Goodhead I."/>
            <person name="Muzny D.M."/>
            <person name="Mourier T."/>
            <person name="Pain A."/>
            <person name="Lu M."/>
            <person name="Harper D."/>
            <person name="Lindsay R."/>
            <person name="Hauser H."/>
            <person name="James K.D."/>
            <person name="Quiles M."/>
            <person name="Madan Babu M."/>
            <person name="Saito T."/>
            <person name="Buchrieser C."/>
            <person name="Wardroper A."/>
            <person name="Felder M."/>
            <person name="Thangavelu M."/>
            <person name="Johnson D."/>
            <person name="Knights A."/>
            <person name="Loulseged H."/>
            <person name="Mungall K.L."/>
            <person name="Oliver K."/>
            <person name="Price C."/>
            <person name="Quail M.A."/>
            <person name="Urushihara H."/>
            <person name="Hernandez J."/>
            <person name="Rabbinowitsch E."/>
            <person name="Steffen D."/>
            <person name="Sanders M."/>
            <person name="Ma J."/>
            <person name="Kohara Y."/>
            <person name="Sharp S."/>
            <person name="Simmonds M.N."/>
            <person name="Spiegler S."/>
            <person name="Tivey A."/>
            <person name="Sugano S."/>
            <person name="White B."/>
            <person name="Walker D."/>
            <person name="Woodward J.R."/>
            <person name="Winckler T."/>
            <person name="Tanaka Y."/>
            <person name="Shaulsky G."/>
            <person name="Schleicher M."/>
            <person name="Weinstock G.M."/>
            <person name="Rosenthal A."/>
            <person name="Cox E.C."/>
            <person name="Chisholm R.L."/>
            <person name="Gibbs R.A."/>
            <person name="Loomis W.F."/>
            <person name="Platzer M."/>
            <person name="Kay R.R."/>
            <person name="Williams J.G."/>
            <person name="Dear P.H."/>
            <person name="Noegel A.A."/>
            <person name="Barrell B.G."/>
            <person name="Kuspa A."/>
        </authorList>
    </citation>
    <scope>NUCLEOTIDE SEQUENCE [LARGE SCALE GENOMIC DNA]</scope>
    <source>
        <strain>AX4</strain>
    </source>
</reference>
<organism>
    <name type="scientific">Dictyostelium discoideum</name>
    <name type="common">Social amoeba</name>
    <dbReference type="NCBI Taxonomy" id="44689"/>
    <lineage>
        <taxon>Eukaryota</taxon>
        <taxon>Amoebozoa</taxon>
        <taxon>Evosea</taxon>
        <taxon>Eumycetozoa</taxon>
        <taxon>Dictyostelia</taxon>
        <taxon>Dictyosteliales</taxon>
        <taxon>Dictyosteliaceae</taxon>
        <taxon>Dictyostelium</taxon>
    </lineage>
</organism>
<name>CPSF3_DICDI</name>
<proteinExistence type="inferred from homology"/>
<gene>
    <name type="primary">cpsf3</name>
    <name type="ORF">DDB_G0274799</name>
</gene>
<feature type="chain" id="PRO_0000327796" description="Cleavage and polyadenylation specificity factor subunit 3">
    <location>
        <begin position="1"/>
        <end position="774"/>
    </location>
</feature>
<feature type="region of interest" description="Disordered" evidence="3">
    <location>
        <begin position="1"/>
        <end position="30"/>
    </location>
</feature>
<feature type="region of interest" description="Disordered" evidence="3">
    <location>
        <begin position="636"/>
        <end position="665"/>
    </location>
</feature>
<feature type="compositionally biased region" description="Basic residues" evidence="3">
    <location>
        <begin position="1"/>
        <end position="26"/>
    </location>
</feature>
<feature type="compositionally biased region" description="Basic and acidic residues" evidence="3">
    <location>
        <begin position="638"/>
        <end position="655"/>
    </location>
</feature>
<feature type="active site" description="Proton donor" evidence="2">
    <location>
        <position position="423"/>
    </location>
</feature>
<feature type="binding site" evidence="1">
    <location>
        <position position="97"/>
    </location>
    <ligand>
        <name>Zn(2+)</name>
        <dbReference type="ChEBI" id="CHEBI:29105"/>
        <label>1</label>
    </ligand>
</feature>
<feature type="binding site" evidence="1">
    <location>
        <position position="99"/>
    </location>
    <ligand>
        <name>Zn(2+)</name>
        <dbReference type="ChEBI" id="CHEBI:29105"/>
        <label>1</label>
    </ligand>
</feature>
<feature type="binding site" evidence="1">
    <location>
        <position position="101"/>
    </location>
    <ligand>
        <name>Zn(2+)</name>
        <dbReference type="ChEBI" id="CHEBI:29105"/>
        <label>2</label>
    </ligand>
</feature>
<feature type="binding site" evidence="1">
    <location>
        <position position="102"/>
    </location>
    <ligand>
        <name>Zn(2+)</name>
        <dbReference type="ChEBI" id="CHEBI:29105"/>
        <label>2</label>
    </ligand>
</feature>
<feature type="binding site" evidence="1">
    <location>
        <position position="185"/>
    </location>
    <ligand>
        <name>Zn(2+)</name>
        <dbReference type="ChEBI" id="CHEBI:29105"/>
        <label>1</label>
    </ligand>
</feature>
<feature type="binding site" evidence="1">
    <location>
        <position position="206"/>
    </location>
    <ligand>
        <name>Zn(2+)</name>
        <dbReference type="ChEBI" id="CHEBI:29105"/>
        <label>1</label>
    </ligand>
</feature>
<feature type="binding site" evidence="1">
    <location>
        <position position="206"/>
    </location>
    <ligand>
        <name>Zn(2+)</name>
        <dbReference type="ChEBI" id="CHEBI:29105"/>
        <label>2</label>
    </ligand>
</feature>
<feature type="binding site" evidence="1">
    <location>
        <position position="445"/>
    </location>
    <ligand>
        <name>Zn(2+)</name>
        <dbReference type="ChEBI" id="CHEBI:29105"/>
        <label>2</label>
    </ligand>
</feature>